<accession>P0AAF6</accession>
<accession>P30858</accession>
<accession>P77355</accession>
<keyword id="KW-0029">Amino-acid transport</keyword>
<keyword id="KW-0067">ATP-binding</keyword>
<keyword id="KW-0997">Cell inner membrane</keyword>
<keyword id="KW-1003">Cell membrane</keyword>
<keyword id="KW-0472">Membrane</keyword>
<keyword id="KW-0547">Nucleotide-binding</keyword>
<keyword id="KW-1185">Reference proteome</keyword>
<keyword id="KW-1278">Translocase</keyword>
<keyword id="KW-0813">Transport</keyword>
<reference key="1">
    <citation type="journal article" date="1993" name="J. Bacteriol.">
        <title>Physical map location of the new artPIQMJ genes of Escherichia coli, encoding a periplasmic arginine transport system.</title>
        <authorList>
            <person name="Wissenbach U."/>
            <person name="Unden G."/>
        </authorList>
    </citation>
    <scope>NUCLEOTIDE SEQUENCE [GENOMIC DNA]</scope>
    <source>
        <strain>K12 / AN387</strain>
    </source>
</reference>
<reference key="2">
    <citation type="journal article" date="1996" name="DNA Res.">
        <title>A 718-kb DNA sequence of the Escherichia coli K-12 genome corresponding to the 12.7-28.0 min region on the linkage map.</title>
        <authorList>
            <person name="Oshima T."/>
            <person name="Aiba H."/>
            <person name="Baba T."/>
            <person name="Fujita K."/>
            <person name="Hayashi K."/>
            <person name="Honjo A."/>
            <person name="Ikemoto K."/>
            <person name="Inada T."/>
            <person name="Itoh T."/>
            <person name="Kajihara M."/>
            <person name="Kanai K."/>
            <person name="Kashimoto K."/>
            <person name="Kimura S."/>
            <person name="Kitagawa M."/>
            <person name="Makino K."/>
            <person name="Masuda S."/>
            <person name="Miki T."/>
            <person name="Mizobuchi K."/>
            <person name="Mori H."/>
            <person name="Motomura K."/>
            <person name="Nakamura Y."/>
            <person name="Nashimoto H."/>
            <person name="Nishio Y."/>
            <person name="Saito N."/>
            <person name="Sampei G."/>
            <person name="Seki Y."/>
            <person name="Tagami H."/>
            <person name="Takemoto K."/>
            <person name="Wada C."/>
            <person name="Yamamoto Y."/>
            <person name="Yano M."/>
            <person name="Horiuchi T."/>
        </authorList>
    </citation>
    <scope>NUCLEOTIDE SEQUENCE [LARGE SCALE GENOMIC DNA]</scope>
    <source>
        <strain>K12 / W3110 / ATCC 27325 / DSM 5911</strain>
    </source>
</reference>
<reference key="3">
    <citation type="journal article" date="1997" name="Science">
        <title>The complete genome sequence of Escherichia coli K-12.</title>
        <authorList>
            <person name="Blattner F.R."/>
            <person name="Plunkett G. III"/>
            <person name="Bloch C.A."/>
            <person name="Perna N.T."/>
            <person name="Burland V."/>
            <person name="Riley M."/>
            <person name="Collado-Vides J."/>
            <person name="Glasner J.D."/>
            <person name="Rode C.K."/>
            <person name="Mayhew G.F."/>
            <person name="Gregor J."/>
            <person name="Davis N.W."/>
            <person name="Kirkpatrick H.A."/>
            <person name="Goeden M.A."/>
            <person name="Rose D.J."/>
            <person name="Mau B."/>
            <person name="Shao Y."/>
        </authorList>
    </citation>
    <scope>NUCLEOTIDE SEQUENCE [LARGE SCALE GENOMIC DNA]</scope>
    <source>
        <strain>K12 / MG1655 / ATCC 47076</strain>
    </source>
</reference>
<reference key="4">
    <citation type="journal article" date="2006" name="Mol. Syst. Biol.">
        <title>Highly accurate genome sequences of Escherichia coli K-12 strains MG1655 and W3110.</title>
        <authorList>
            <person name="Hayashi K."/>
            <person name="Morooka N."/>
            <person name="Yamamoto Y."/>
            <person name="Fujita K."/>
            <person name="Isono K."/>
            <person name="Choi S."/>
            <person name="Ohtsubo E."/>
            <person name="Baba T."/>
            <person name="Wanner B.L."/>
            <person name="Mori H."/>
            <person name="Horiuchi T."/>
        </authorList>
    </citation>
    <scope>NUCLEOTIDE SEQUENCE [LARGE SCALE GENOMIC DNA]</scope>
    <source>
        <strain>K12 / W3110 / ATCC 27325 / DSM 5911</strain>
    </source>
</reference>
<reference key="5">
    <citation type="journal article" date="1995" name="Mol. Microbiol.">
        <title>A third periplasmic transport system for L-arginine in Escherichia coli: molecular characterization of the artPIQMJ genes, arginine binding and transport.</title>
        <authorList>
            <person name="Wissenbach U."/>
            <person name="Six S."/>
            <person name="Bongaerts J."/>
            <person name="Ternes D."/>
            <person name="Steinwachs S."/>
            <person name="Unden G."/>
        </authorList>
    </citation>
    <scope>FUNCTION</scope>
    <scope>SUBUNIT</scope>
</reference>
<gene>
    <name evidence="3" type="primary">artP</name>
    <name type="ordered locus">b0864</name>
    <name type="ordered locus">JW0848</name>
</gene>
<feature type="chain" id="PRO_0000091939" description="Arginine transport ATP-binding protein ArtP">
    <location>
        <begin position="1"/>
        <end position="242"/>
    </location>
</feature>
<feature type="domain" description="ABC transporter" evidence="1">
    <location>
        <begin position="3"/>
        <end position="241"/>
    </location>
</feature>
<feature type="binding site" evidence="1">
    <location>
        <begin position="35"/>
        <end position="42"/>
    </location>
    <ligand>
        <name>ATP</name>
        <dbReference type="ChEBI" id="CHEBI:30616"/>
    </ligand>
</feature>
<feature type="sequence conflict" description="In Ref. 1; CAA60101." evidence="4" ref="1">
    <original>WP</original>
    <variation>CA</variation>
    <location>
        <begin position="94"/>
        <end position="95"/>
    </location>
</feature>
<feature type="sequence conflict" description="In Ref. 1; CAA60101." evidence="4" ref="1">
    <original>R</original>
    <variation>S</variation>
    <location>
        <position position="121"/>
    </location>
</feature>
<protein>
    <recommendedName>
        <fullName evidence="4">Arginine transport ATP-binding protein ArtP</fullName>
        <ecNumber evidence="5">7.4.2.1</ecNumber>
    </recommendedName>
</protein>
<organism>
    <name type="scientific">Escherichia coli (strain K12)</name>
    <dbReference type="NCBI Taxonomy" id="83333"/>
    <lineage>
        <taxon>Bacteria</taxon>
        <taxon>Pseudomonadati</taxon>
        <taxon>Pseudomonadota</taxon>
        <taxon>Gammaproteobacteria</taxon>
        <taxon>Enterobacterales</taxon>
        <taxon>Enterobacteriaceae</taxon>
        <taxon>Escherichia</taxon>
    </lineage>
</organism>
<evidence type="ECO:0000255" key="1">
    <source>
        <dbReference type="PROSITE-ProRule" id="PRU00434"/>
    </source>
</evidence>
<evidence type="ECO:0000269" key="2">
    <source>
    </source>
</evidence>
<evidence type="ECO:0000303" key="3">
    <source>
    </source>
</evidence>
<evidence type="ECO:0000305" key="4"/>
<evidence type="ECO:0000305" key="5">
    <source>
    </source>
</evidence>
<sequence>MSIQLNGINCFYGAHQALFDITLDCPQGETLVLLGPSGAGKSSLLRVLNLLEMPRSGTLNIAGNHFDFTKTPSDKAIRDLRRNVGMVFQQYNLWPHLTVQQNLIEAPCRVLGLSKDQALARAEKLLERLRLKPYSDRYPLHLSGGQQQRVAIARALMMEPQVLLFDEPTAALDPEITAQIVSIIRELAETNITQVIVTHEVEVARKTASRVVYMENGHIVEQGDASCFTEPQTEAFKNYLSH</sequence>
<dbReference type="EC" id="7.4.2.1" evidence="5"/>
<dbReference type="EMBL" id="X86160">
    <property type="protein sequence ID" value="CAA60101.1"/>
    <property type="molecule type" value="Genomic_DNA"/>
</dbReference>
<dbReference type="EMBL" id="U00096">
    <property type="protein sequence ID" value="AAC73951.1"/>
    <property type="molecule type" value="Genomic_DNA"/>
</dbReference>
<dbReference type="EMBL" id="AP009048">
    <property type="protein sequence ID" value="BAA35578.1"/>
    <property type="molecule type" value="Genomic_DNA"/>
</dbReference>
<dbReference type="PIR" id="H64824">
    <property type="entry name" value="H64824"/>
</dbReference>
<dbReference type="RefSeq" id="NP_415385.1">
    <property type="nucleotide sequence ID" value="NC_000913.3"/>
</dbReference>
<dbReference type="RefSeq" id="WP_000027205.1">
    <property type="nucleotide sequence ID" value="NZ_STEB01000019.1"/>
</dbReference>
<dbReference type="SMR" id="P0AAF6"/>
<dbReference type="BioGRID" id="4263133">
    <property type="interactions" value="14"/>
</dbReference>
<dbReference type="BioGRID" id="849863">
    <property type="interactions" value="6"/>
</dbReference>
<dbReference type="ComplexPortal" id="CPX-4318">
    <property type="entry name" value="Arginine ABC transporter complex, artI variant"/>
</dbReference>
<dbReference type="ComplexPortal" id="CPX-4319">
    <property type="entry name" value="Arginine ABC transporter complex, artJ variant"/>
</dbReference>
<dbReference type="DIP" id="DIP-47917N"/>
<dbReference type="FunCoup" id="P0AAF6">
    <property type="interactions" value="359"/>
</dbReference>
<dbReference type="IntAct" id="P0AAF6">
    <property type="interactions" value="12"/>
</dbReference>
<dbReference type="STRING" id="511145.b0864"/>
<dbReference type="TCDB" id="3.A.1.3.3">
    <property type="family name" value="the atp-binding cassette (abc) superfamily"/>
</dbReference>
<dbReference type="jPOST" id="P0AAF6"/>
<dbReference type="PaxDb" id="511145-b0864"/>
<dbReference type="EnsemblBacteria" id="AAC73951">
    <property type="protein sequence ID" value="AAC73951"/>
    <property type="gene ID" value="b0864"/>
</dbReference>
<dbReference type="GeneID" id="93776558"/>
<dbReference type="GeneID" id="945489"/>
<dbReference type="KEGG" id="ecj:JW0848"/>
<dbReference type="KEGG" id="eco:b0864"/>
<dbReference type="KEGG" id="ecoc:C3026_05380"/>
<dbReference type="PATRIC" id="fig|1411691.4.peg.1413"/>
<dbReference type="EchoBASE" id="EB1581"/>
<dbReference type="eggNOG" id="COG1126">
    <property type="taxonomic scope" value="Bacteria"/>
</dbReference>
<dbReference type="HOGENOM" id="CLU_000604_1_22_6"/>
<dbReference type="InParanoid" id="P0AAF6"/>
<dbReference type="OMA" id="YMEQGHI"/>
<dbReference type="OrthoDB" id="9802264at2"/>
<dbReference type="PhylomeDB" id="P0AAF6"/>
<dbReference type="BioCyc" id="EcoCyc:ARTP-MONOMER"/>
<dbReference type="BioCyc" id="MetaCyc:ARTP-MONOMER"/>
<dbReference type="PRO" id="PR:P0AAF6"/>
<dbReference type="Proteomes" id="UP000000625">
    <property type="component" value="Chromosome"/>
</dbReference>
<dbReference type="GO" id="GO:0055052">
    <property type="term" value="C:ATP-binding cassette (ABC) transporter complex, substrate-binding subunit-containing"/>
    <property type="evidence" value="ECO:0000266"/>
    <property type="project" value="EcoCyc"/>
</dbReference>
<dbReference type="GO" id="GO:0016020">
    <property type="term" value="C:membrane"/>
    <property type="evidence" value="ECO:0000303"/>
    <property type="project" value="ComplexPortal"/>
</dbReference>
<dbReference type="GO" id="GO:0005886">
    <property type="term" value="C:plasma membrane"/>
    <property type="evidence" value="ECO:0000314"/>
    <property type="project" value="EcoCyc"/>
</dbReference>
<dbReference type="GO" id="GO:0005524">
    <property type="term" value="F:ATP binding"/>
    <property type="evidence" value="ECO:0007669"/>
    <property type="project" value="UniProtKB-KW"/>
</dbReference>
<dbReference type="GO" id="GO:0016887">
    <property type="term" value="F:ATP hydrolysis activity"/>
    <property type="evidence" value="ECO:0007669"/>
    <property type="project" value="InterPro"/>
</dbReference>
<dbReference type="GO" id="GO:0015426">
    <property type="term" value="F:ATPase-coupled polar amino acid-transporter activity"/>
    <property type="evidence" value="ECO:0000255"/>
    <property type="project" value="EcoCyc"/>
</dbReference>
<dbReference type="GO" id="GO:0097638">
    <property type="term" value="P:L-arginine import across plasma membrane"/>
    <property type="evidence" value="ECO:0000314"/>
    <property type="project" value="EcoCyc"/>
</dbReference>
<dbReference type="FunFam" id="3.40.50.300:FF:000331">
    <property type="entry name" value="Arginine ABC transporter ATP-binding protein ArtP"/>
    <property type="match status" value="1"/>
</dbReference>
<dbReference type="Gene3D" id="3.40.50.300">
    <property type="entry name" value="P-loop containing nucleotide triphosphate hydrolases"/>
    <property type="match status" value="1"/>
</dbReference>
<dbReference type="InterPro" id="IPR003593">
    <property type="entry name" value="AAA+_ATPase"/>
</dbReference>
<dbReference type="InterPro" id="IPR030679">
    <property type="entry name" value="ABC_ATPase_HisP-typ"/>
</dbReference>
<dbReference type="InterPro" id="IPR003439">
    <property type="entry name" value="ABC_transporter-like_ATP-bd"/>
</dbReference>
<dbReference type="InterPro" id="IPR017871">
    <property type="entry name" value="ABC_transporter-like_CS"/>
</dbReference>
<dbReference type="InterPro" id="IPR050086">
    <property type="entry name" value="MetN_ABC_transporter-like"/>
</dbReference>
<dbReference type="InterPro" id="IPR027417">
    <property type="entry name" value="P-loop_NTPase"/>
</dbReference>
<dbReference type="NCBIfam" id="NF008338">
    <property type="entry name" value="PRK11124.1"/>
    <property type="match status" value="1"/>
</dbReference>
<dbReference type="PANTHER" id="PTHR43166">
    <property type="entry name" value="AMINO ACID IMPORT ATP-BINDING PROTEIN"/>
    <property type="match status" value="1"/>
</dbReference>
<dbReference type="PANTHER" id="PTHR43166:SF25">
    <property type="entry name" value="ARGININE TRANSPORT ATP-BINDING PROTEIN ARTP"/>
    <property type="match status" value="1"/>
</dbReference>
<dbReference type="Pfam" id="PF00005">
    <property type="entry name" value="ABC_tran"/>
    <property type="match status" value="1"/>
</dbReference>
<dbReference type="PIRSF" id="PIRSF039085">
    <property type="entry name" value="ABC_ATPase_HisP"/>
    <property type="match status" value="1"/>
</dbReference>
<dbReference type="SMART" id="SM00382">
    <property type="entry name" value="AAA"/>
    <property type="match status" value="1"/>
</dbReference>
<dbReference type="SUPFAM" id="SSF52540">
    <property type="entry name" value="P-loop containing nucleoside triphosphate hydrolases"/>
    <property type="match status" value="1"/>
</dbReference>
<dbReference type="PROSITE" id="PS00211">
    <property type="entry name" value="ABC_TRANSPORTER_1"/>
    <property type="match status" value="1"/>
</dbReference>
<dbReference type="PROSITE" id="PS50893">
    <property type="entry name" value="ABC_TRANSPORTER_2"/>
    <property type="match status" value="1"/>
</dbReference>
<name>ARTP_ECOLI</name>
<proteinExistence type="evidence at protein level"/>
<comment type="function">
    <text evidence="2">Part of the ABC transporter complex ArtPIQMJ involved in arginine transport. Probably responsible for energy coupling to the transport system.</text>
</comment>
<comment type="catalytic activity">
    <reaction evidence="5">
        <text>a polar amino acid(out) + ATP + H2O = a polar amino acid(in) + ADP + phosphate + H(+)</text>
        <dbReference type="Rhea" id="RHEA:14673"/>
        <dbReference type="ChEBI" id="CHEBI:15377"/>
        <dbReference type="ChEBI" id="CHEBI:15378"/>
        <dbReference type="ChEBI" id="CHEBI:30616"/>
        <dbReference type="ChEBI" id="CHEBI:43474"/>
        <dbReference type="ChEBI" id="CHEBI:62031"/>
        <dbReference type="ChEBI" id="CHEBI:456216"/>
        <dbReference type="EC" id="7.4.2.1"/>
    </reaction>
    <physiologicalReaction direction="left-to-right" evidence="5">
        <dbReference type="Rhea" id="RHEA:14674"/>
    </physiologicalReaction>
</comment>
<comment type="catalytic activity">
    <reaction evidence="5">
        <text>L-arginine(out) + ATP + H2O = L-arginine(in) + ADP + phosphate + H(+)</text>
        <dbReference type="Rhea" id="RHEA:29879"/>
        <dbReference type="ChEBI" id="CHEBI:15377"/>
        <dbReference type="ChEBI" id="CHEBI:15378"/>
        <dbReference type="ChEBI" id="CHEBI:30616"/>
        <dbReference type="ChEBI" id="CHEBI:32682"/>
        <dbReference type="ChEBI" id="CHEBI:43474"/>
        <dbReference type="ChEBI" id="CHEBI:456216"/>
        <dbReference type="EC" id="7.4.2.1"/>
    </reaction>
    <physiologicalReaction direction="left-to-right" evidence="5">
        <dbReference type="Rhea" id="RHEA:29880"/>
    </physiologicalReaction>
</comment>
<comment type="subunit">
    <text evidence="5">The complex is composed of two ATP-binding proteins (ArtP), two transmembrane proteins (ArtM and ArtQ) and two solute-binding proteins (ArtJ and ArtI).</text>
</comment>
<comment type="subcellular location">
    <subcellularLocation>
        <location evidence="4">Cell inner membrane</location>
        <topology evidence="4">Peripheral membrane protein</topology>
    </subcellularLocation>
</comment>
<comment type="similarity">
    <text evidence="4">Belongs to the ABC transporter superfamily.</text>
</comment>